<gene>
    <name type="primary">MMP14</name>
</gene>
<protein>
    <recommendedName>
        <fullName>Matrix metalloproteinase-14</fullName>
        <shortName>MMP-14</shortName>
        <ecNumber evidence="3">3.4.24.80</ecNumber>
    </recommendedName>
</protein>
<sequence>MSPAPRPSRCLLLPLLTLGTALASLGSAQSSSFSPEAWLQQYGYLPPGDLRTHTQRSPQSLSAAIAAMQKFYGLRVTGKADADTMKAMRRPRCGVPDKFGAEIKANVRRKRYAIQGLKWQHNEITFCIQNYTPKVGEYATYEAIRKAFRVWESATPLRFREVPYAYIREGHEKQADVMIFFAEGFHGDSTPFDGEGGFLAHAYFPGPNIGGDTHFDSAEPWTVGNEDLNGNDIFLVAVHELGHALGLEHSSDPSAIMAPFYQWMDTENFVLPEDDRRGIQQLYGSESGFPTKMPPQPRTTSRPSVPDKPKNPTYGPNTCDGNFDTVAMLRGEMFVFKERWFWRVRNNQVMDGYPMPIGQFWRGLPASINTAYERKDGKFVFFKGDKHWVFDEASLEPGYPKHIKELGRGLPTDKIDAALFWMPNGKTYFFRGNKYYRFNEELRAVDSEYPKNIKVWEGIPESPRGSFMGSDEVFTYFYKGNKYWKFDNQKLKVEPGYPKSALRDWMGCPSGGRPDEGTEEETEVIIIEVDEEGGGAVSAAAVVLPVLLLLLVLAVGLAVFFFRRHGTPRRLLYCQRSLLDKV</sequence>
<organism>
    <name type="scientific">Pongo abelii</name>
    <name type="common">Sumatran orangutan</name>
    <name type="synonym">Pongo pygmaeus abelii</name>
    <dbReference type="NCBI Taxonomy" id="9601"/>
    <lineage>
        <taxon>Eukaryota</taxon>
        <taxon>Metazoa</taxon>
        <taxon>Chordata</taxon>
        <taxon>Craniata</taxon>
        <taxon>Vertebrata</taxon>
        <taxon>Euteleostomi</taxon>
        <taxon>Mammalia</taxon>
        <taxon>Eutheria</taxon>
        <taxon>Euarchontoglires</taxon>
        <taxon>Primates</taxon>
        <taxon>Haplorrhini</taxon>
        <taxon>Catarrhini</taxon>
        <taxon>Hominidae</taxon>
        <taxon>Pongo</taxon>
    </lineage>
</organism>
<keyword id="KW-0106">Calcium</keyword>
<keyword id="KW-1003">Cell membrane</keyword>
<keyword id="KW-0165">Cleavage on pair of basic residues</keyword>
<keyword id="KW-0963">Cytoplasm</keyword>
<keyword id="KW-1015">Disulfide bond</keyword>
<keyword id="KW-0378">Hydrolase</keyword>
<keyword id="KW-0472">Membrane</keyword>
<keyword id="KW-0479">Metal-binding</keyword>
<keyword id="KW-0482">Metalloprotease</keyword>
<keyword id="KW-0597">Phosphoprotein</keyword>
<keyword id="KW-0645">Protease</keyword>
<keyword id="KW-1185">Reference proteome</keyword>
<keyword id="KW-0677">Repeat</keyword>
<keyword id="KW-0732">Signal</keyword>
<keyword id="KW-0812">Transmembrane</keyword>
<keyword id="KW-1133">Transmembrane helix</keyword>
<keyword id="KW-0862">Zinc</keyword>
<keyword id="KW-0865">Zymogen</keyword>
<name>MMP14_PONAB</name>
<proteinExistence type="evidence at transcript level"/>
<evidence type="ECO:0000250" key="1">
    <source>
        <dbReference type="UniProtKB" id="P03956"/>
    </source>
</evidence>
<evidence type="ECO:0000250" key="2">
    <source>
        <dbReference type="UniProtKB" id="P08253"/>
    </source>
</evidence>
<evidence type="ECO:0000250" key="3">
    <source>
        <dbReference type="UniProtKB" id="P50281"/>
    </source>
</evidence>
<evidence type="ECO:0000250" key="4">
    <source>
        <dbReference type="UniProtKB" id="P53690"/>
    </source>
</evidence>
<evidence type="ECO:0000255" key="5"/>
<evidence type="ECO:0000255" key="6">
    <source>
        <dbReference type="PROSITE-ProRule" id="PRU10095"/>
    </source>
</evidence>
<evidence type="ECO:0000256" key="7">
    <source>
        <dbReference type="SAM" id="MobiDB-lite"/>
    </source>
</evidence>
<evidence type="ECO:0000305" key="8"/>
<dbReference type="EC" id="3.4.24.80" evidence="3"/>
<dbReference type="EMBL" id="CR857445">
    <property type="protein sequence ID" value="CAH89736.1"/>
    <property type="molecule type" value="mRNA"/>
</dbReference>
<dbReference type="RefSeq" id="NP_001124793.1">
    <property type="nucleotide sequence ID" value="NM_001131321.2"/>
</dbReference>
<dbReference type="BMRB" id="Q5RES1"/>
<dbReference type="SMR" id="Q5RES1"/>
<dbReference type="FunCoup" id="Q5RES1">
    <property type="interactions" value="915"/>
</dbReference>
<dbReference type="STRING" id="9601.ENSPPYP00000006416"/>
<dbReference type="BindingDB" id="Q5RES1"/>
<dbReference type="MEROPS" id="M10.014"/>
<dbReference type="GeneID" id="100171646"/>
<dbReference type="KEGG" id="pon:100171646"/>
<dbReference type="CTD" id="4323"/>
<dbReference type="eggNOG" id="KOG1565">
    <property type="taxonomic scope" value="Eukaryota"/>
</dbReference>
<dbReference type="InParanoid" id="Q5RES1"/>
<dbReference type="OrthoDB" id="406838at2759"/>
<dbReference type="Proteomes" id="UP000001595">
    <property type="component" value="Unplaced"/>
</dbReference>
<dbReference type="GO" id="GO:0031012">
    <property type="term" value="C:extracellular matrix"/>
    <property type="evidence" value="ECO:0007669"/>
    <property type="project" value="InterPro"/>
</dbReference>
<dbReference type="GO" id="GO:0005615">
    <property type="term" value="C:extracellular space"/>
    <property type="evidence" value="ECO:0007669"/>
    <property type="project" value="TreeGrafter"/>
</dbReference>
<dbReference type="GO" id="GO:0042470">
    <property type="term" value="C:melanosome"/>
    <property type="evidence" value="ECO:0007669"/>
    <property type="project" value="UniProtKB-SubCell"/>
</dbReference>
<dbReference type="GO" id="GO:0005886">
    <property type="term" value="C:plasma membrane"/>
    <property type="evidence" value="ECO:0007669"/>
    <property type="project" value="UniProtKB-SubCell"/>
</dbReference>
<dbReference type="GO" id="GO:0004222">
    <property type="term" value="F:metalloendopeptidase activity"/>
    <property type="evidence" value="ECO:0000250"/>
    <property type="project" value="UniProtKB"/>
</dbReference>
<dbReference type="GO" id="GO:0008270">
    <property type="term" value="F:zinc ion binding"/>
    <property type="evidence" value="ECO:0007669"/>
    <property type="project" value="InterPro"/>
</dbReference>
<dbReference type="GO" id="GO:0030574">
    <property type="term" value="P:collagen catabolic process"/>
    <property type="evidence" value="ECO:0007669"/>
    <property type="project" value="TreeGrafter"/>
</dbReference>
<dbReference type="GO" id="GO:0030198">
    <property type="term" value="P:extracellular matrix organization"/>
    <property type="evidence" value="ECO:0007669"/>
    <property type="project" value="TreeGrafter"/>
</dbReference>
<dbReference type="GO" id="GO:0045746">
    <property type="term" value="P:negative regulation of Notch signaling pathway"/>
    <property type="evidence" value="ECO:0000250"/>
    <property type="project" value="UniProtKB"/>
</dbReference>
<dbReference type="GO" id="GO:0045579">
    <property type="term" value="P:positive regulation of B cell differentiation"/>
    <property type="evidence" value="ECO:0000250"/>
    <property type="project" value="UniProtKB"/>
</dbReference>
<dbReference type="GO" id="GO:0010831">
    <property type="term" value="P:positive regulation of myotube differentiation"/>
    <property type="evidence" value="ECO:0000250"/>
    <property type="project" value="UniProtKB"/>
</dbReference>
<dbReference type="GO" id="GO:0001501">
    <property type="term" value="P:skeletal system development"/>
    <property type="evidence" value="ECO:0007669"/>
    <property type="project" value="TreeGrafter"/>
</dbReference>
<dbReference type="GO" id="GO:0031638">
    <property type="term" value="P:zymogen activation"/>
    <property type="evidence" value="ECO:0007669"/>
    <property type="project" value="TreeGrafter"/>
</dbReference>
<dbReference type="CDD" id="cd00094">
    <property type="entry name" value="HX"/>
    <property type="match status" value="1"/>
</dbReference>
<dbReference type="CDD" id="cd04278">
    <property type="entry name" value="ZnMc_MMP"/>
    <property type="match status" value="1"/>
</dbReference>
<dbReference type="FunFam" id="3.40.390.10:FF:000005">
    <property type="entry name" value="Matrix metallopeptidase 16"/>
    <property type="match status" value="1"/>
</dbReference>
<dbReference type="FunFam" id="2.110.10.10:FF:000001">
    <property type="entry name" value="Matrix metallopeptidase 24"/>
    <property type="match status" value="1"/>
</dbReference>
<dbReference type="FunFam" id="1.10.101.10:FF:000002">
    <property type="entry name" value="Matrix metalloproteinase-14 preproprotein"/>
    <property type="match status" value="1"/>
</dbReference>
<dbReference type="Gene3D" id="3.40.390.10">
    <property type="entry name" value="Collagenase (Catalytic Domain)"/>
    <property type="match status" value="1"/>
</dbReference>
<dbReference type="Gene3D" id="2.110.10.10">
    <property type="entry name" value="Hemopexin-like domain"/>
    <property type="match status" value="1"/>
</dbReference>
<dbReference type="Gene3D" id="1.10.101.10">
    <property type="entry name" value="PGBD-like superfamily/PGBD"/>
    <property type="match status" value="1"/>
</dbReference>
<dbReference type="InterPro" id="IPR000585">
    <property type="entry name" value="Hemopexin-like_dom"/>
</dbReference>
<dbReference type="InterPro" id="IPR036375">
    <property type="entry name" value="Hemopexin-like_dom_sf"/>
</dbReference>
<dbReference type="InterPro" id="IPR018487">
    <property type="entry name" value="Hemopexin-like_repeat"/>
</dbReference>
<dbReference type="InterPro" id="IPR018486">
    <property type="entry name" value="Hemopexin_CS"/>
</dbReference>
<dbReference type="InterPro" id="IPR033739">
    <property type="entry name" value="M10A_MMP"/>
</dbReference>
<dbReference type="InterPro" id="IPR024079">
    <property type="entry name" value="MetalloPept_cat_dom_sf"/>
</dbReference>
<dbReference type="InterPro" id="IPR001818">
    <property type="entry name" value="Pept_M10_metallopeptidase"/>
</dbReference>
<dbReference type="InterPro" id="IPR021190">
    <property type="entry name" value="Pept_M10A"/>
</dbReference>
<dbReference type="InterPro" id="IPR021805">
    <property type="entry name" value="Pept_M10A_metallopeptidase_C"/>
</dbReference>
<dbReference type="InterPro" id="IPR021158">
    <property type="entry name" value="Pept_M10A_Zn_BS"/>
</dbReference>
<dbReference type="InterPro" id="IPR006026">
    <property type="entry name" value="Peptidase_Metallo"/>
</dbReference>
<dbReference type="InterPro" id="IPR002477">
    <property type="entry name" value="Peptidoglycan-bd-like"/>
</dbReference>
<dbReference type="InterPro" id="IPR036365">
    <property type="entry name" value="PGBD-like_sf"/>
</dbReference>
<dbReference type="InterPro" id="IPR036366">
    <property type="entry name" value="PGBDSf"/>
</dbReference>
<dbReference type="PANTHER" id="PTHR10201">
    <property type="entry name" value="MATRIX METALLOPROTEINASE"/>
    <property type="match status" value="1"/>
</dbReference>
<dbReference type="PANTHER" id="PTHR10201:SF24">
    <property type="entry name" value="MATRIX METALLOPROTEINASE-14"/>
    <property type="match status" value="1"/>
</dbReference>
<dbReference type="Pfam" id="PF11857">
    <property type="entry name" value="DUF3377"/>
    <property type="match status" value="1"/>
</dbReference>
<dbReference type="Pfam" id="PF00045">
    <property type="entry name" value="Hemopexin"/>
    <property type="match status" value="4"/>
</dbReference>
<dbReference type="Pfam" id="PF00413">
    <property type="entry name" value="Peptidase_M10"/>
    <property type="match status" value="1"/>
</dbReference>
<dbReference type="Pfam" id="PF01471">
    <property type="entry name" value="PG_binding_1"/>
    <property type="match status" value="1"/>
</dbReference>
<dbReference type="PIRSF" id="PIRSF001191">
    <property type="entry name" value="Peptidase_M10A_matrix"/>
    <property type="match status" value="1"/>
</dbReference>
<dbReference type="PRINTS" id="PR00138">
    <property type="entry name" value="MATRIXIN"/>
</dbReference>
<dbReference type="SMART" id="SM00120">
    <property type="entry name" value="HX"/>
    <property type="match status" value="4"/>
</dbReference>
<dbReference type="SMART" id="SM00235">
    <property type="entry name" value="ZnMc"/>
    <property type="match status" value="1"/>
</dbReference>
<dbReference type="SUPFAM" id="SSF50923">
    <property type="entry name" value="Hemopexin-like domain"/>
    <property type="match status" value="1"/>
</dbReference>
<dbReference type="SUPFAM" id="SSF55486">
    <property type="entry name" value="Metalloproteases ('zincins'), catalytic domain"/>
    <property type="match status" value="1"/>
</dbReference>
<dbReference type="SUPFAM" id="SSF47090">
    <property type="entry name" value="PGBD-like"/>
    <property type="match status" value="1"/>
</dbReference>
<dbReference type="PROSITE" id="PS00546">
    <property type="entry name" value="CYSTEINE_SWITCH"/>
    <property type="match status" value="1"/>
</dbReference>
<dbReference type="PROSITE" id="PS00024">
    <property type="entry name" value="HEMOPEXIN"/>
    <property type="match status" value="1"/>
</dbReference>
<dbReference type="PROSITE" id="PS51642">
    <property type="entry name" value="HEMOPEXIN_2"/>
    <property type="match status" value="4"/>
</dbReference>
<dbReference type="PROSITE" id="PS00142">
    <property type="entry name" value="ZINC_PROTEASE"/>
    <property type="match status" value="1"/>
</dbReference>
<feature type="signal peptide" evidence="5">
    <location>
        <begin position="1"/>
        <end position="20"/>
    </location>
</feature>
<feature type="propeptide" id="PRO_0000330604" description="Activation peptide" evidence="3">
    <location>
        <begin position="21"/>
        <end position="111"/>
    </location>
</feature>
<feature type="chain" id="PRO_0000330605" description="Matrix metalloproteinase-14">
    <location>
        <begin position="112"/>
        <end position="582"/>
    </location>
</feature>
<feature type="topological domain" description="Extracellular" evidence="5">
    <location>
        <begin position="112"/>
        <end position="541"/>
    </location>
</feature>
<feature type="transmembrane region" description="Helical" evidence="5">
    <location>
        <begin position="542"/>
        <end position="562"/>
    </location>
</feature>
<feature type="topological domain" description="Cytoplasmic" evidence="5">
    <location>
        <begin position="563"/>
        <end position="582"/>
    </location>
</feature>
<feature type="repeat" description="Hemopexin 1">
    <location>
        <begin position="316"/>
        <end position="364"/>
    </location>
</feature>
<feature type="repeat" description="Hemopexin 2">
    <location>
        <begin position="365"/>
        <end position="410"/>
    </location>
</feature>
<feature type="repeat" description="Hemopexin 3">
    <location>
        <begin position="412"/>
        <end position="460"/>
    </location>
</feature>
<feature type="repeat" description="Hemopexin 4">
    <location>
        <begin position="461"/>
        <end position="508"/>
    </location>
</feature>
<feature type="region of interest" description="Disordered" evidence="7">
    <location>
        <begin position="284"/>
        <end position="317"/>
    </location>
</feature>
<feature type="short sequence motif" description="Cysteine switch" evidence="1">
    <location>
        <begin position="91"/>
        <end position="98"/>
    </location>
</feature>
<feature type="active site" evidence="6">
    <location>
        <position position="240"/>
    </location>
</feature>
<feature type="binding site" description="in inhibited form" evidence="1">
    <location>
        <position position="93"/>
    </location>
    <ligand>
        <name>Zn(2+)</name>
        <dbReference type="ChEBI" id="CHEBI:29105"/>
        <label>2</label>
        <note>catalytic</note>
    </ligand>
</feature>
<feature type="binding site" evidence="3">
    <location>
        <position position="186"/>
    </location>
    <ligand>
        <name>Zn(2+)</name>
        <dbReference type="ChEBI" id="CHEBI:29105"/>
        <label>1</label>
        <note>structural</note>
    </ligand>
</feature>
<feature type="binding site" evidence="3">
    <location>
        <position position="188"/>
    </location>
    <ligand>
        <name>Zn(2+)</name>
        <dbReference type="ChEBI" id="CHEBI:29105"/>
        <label>1</label>
        <note>structural</note>
    </ligand>
</feature>
<feature type="binding site" evidence="3">
    <location>
        <position position="193"/>
    </location>
    <ligand>
        <name>Ca(2+)</name>
        <dbReference type="ChEBI" id="CHEBI:29108"/>
        <label>2</label>
    </ligand>
</feature>
<feature type="binding site" evidence="3">
    <location>
        <position position="194"/>
    </location>
    <ligand>
        <name>Ca(2+)</name>
        <dbReference type="ChEBI" id="CHEBI:29108"/>
        <label>2</label>
    </ligand>
</feature>
<feature type="binding site" evidence="3">
    <location>
        <position position="196"/>
    </location>
    <ligand>
        <name>Ca(2+)</name>
        <dbReference type="ChEBI" id="CHEBI:29108"/>
        <label>2</label>
    </ligand>
</feature>
<feature type="binding site" evidence="3">
    <location>
        <position position="198"/>
    </location>
    <ligand>
        <name>Ca(2+)</name>
        <dbReference type="ChEBI" id="CHEBI:29108"/>
        <label>2</label>
    </ligand>
</feature>
<feature type="binding site" evidence="3">
    <location>
        <position position="201"/>
    </location>
    <ligand>
        <name>Zn(2+)</name>
        <dbReference type="ChEBI" id="CHEBI:29105"/>
        <label>1</label>
        <note>structural</note>
    </ligand>
</feature>
<feature type="binding site" evidence="3">
    <location>
        <position position="208"/>
    </location>
    <ligand>
        <name>Ca(2+)</name>
        <dbReference type="ChEBI" id="CHEBI:29108"/>
        <label>1</label>
    </ligand>
</feature>
<feature type="binding site" evidence="3">
    <location>
        <position position="210"/>
    </location>
    <ligand>
        <name>Ca(2+)</name>
        <dbReference type="ChEBI" id="CHEBI:29108"/>
        <label>1</label>
    </ligand>
</feature>
<feature type="binding site" evidence="3">
    <location>
        <position position="212"/>
    </location>
    <ligand>
        <name>Ca(2+)</name>
        <dbReference type="ChEBI" id="CHEBI:29108"/>
        <label>1</label>
    </ligand>
</feature>
<feature type="binding site" evidence="3">
    <location>
        <position position="214"/>
    </location>
    <ligand>
        <name>Zn(2+)</name>
        <dbReference type="ChEBI" id="CHEBI:29105"/>
        <label>1</label>
        <note>structural</note>
    </ligand>
</feature>
<feature type="binding site" evidence="3">
    <location>
        <position position="216"/>
    </location>
    <ligand>
        <name>Ca(2+)</name>
        <dbReference type="ChEBI" id="CHEBI:29108"/>
        <label>2</label>
    </ligand>
</feature>
<feature type="binding site" evidence="3">
    <location>
        <position position="219"/>
    </location>
    <ligand>
        <name>Ca(2+)</name>
        <dbReference type="ChEBI" id="CHEBI:29108"/>
        <label>2</label>
    </ligand>
</feature>
<feature type="binding site" evidence="3">
    <location>
        <position position="239"/>
    </location>
    <ligand>
        <name>Zn(2+)</name>
        <dbReference type="ChEBI" id="CHEBI:29105"/>
        <label>2</label>
        <note>catalytic</note>
    </ligand>
</feature>
<feature type="binding site">
    <location>
        <position position="239"/>
    </location>
    <ligand>
        <name>Zn(2+)</name>
        <dbReference type="ChEBI" id="CHEBI:29105"/>
        <note>catalytic</note>
    </ligand>
</feature>
<feature type="binding site" evidence="3">
    <location>
        <position position="243"/>
    </location>
    <ligand>
        <name>Zn(2+)</name>
        <dbReference type="ChEBI" id="CHEBI:29105"/>
        <label>2</label>
        <note>catalytic</note>
    </ligand>
</feature>
<feature type="binding site">
    <location>
        <position position="243"/>
    </location>
    <ligand>
        <name>Zn(2+)</name>
        <dbReference type="ChEBI" id="CHEBI:29105"/>
        <note>catalytic</note>
    </ligand>
</feature>
<feature type="binding site" evidence="3">
    <location>
        <position position="249"/>
    </location>
    <ligand>
        <name>Zn(2+)</name>
        <dbReference type="ChEBI" id="CHEBI:29105"/>
        <label>2</label>
        <note>catalytic</note>
    </ligand>
</feature>
<feature type="binding site">
    <location>
        <position position="249"/>
    </location>
    <ligand>
        <name>Zn(2+)</name>
        <dbReference type="ChEBI" id="CHEBI:29105"/>
        <note>catalytic</note>
    </ligand>
</feature>
<feature type="modified residue" description="Phosphotyrosine; by PKDCC" evidence="3">
    <location>
        <position position="399"/>
    </location>
</feature>
<feature type="disulfide bond" evidence="2">
    <location>
        <begin position="319"/>
        <end position="508"/>
    </location>
</feature>
<comment type="function">
    <text evidence="3 4">Endopeptidase that degrades various components of the extracellular matrix such as collagen (By similarity). Essential for pericellular collagenolysis and modeling of skeletal and extraskeletal connective tissues during development (By similarity). Activates progelatinase A/MMP2, thereby acting as a positive regulator of cell growth and migration. Involved in the formation of the fibrovascular tissues in association with pro-MMP2. May be involved in actin cytoskeleton reorganization by cleaving PTK7. Acts as a regulator of Notch signaling by mediating cleavage and inhibition of DLL1. Cleaves ADGRB1 to release vasculostatin-40 which inhibits angiogenesis. Acts as a negative regulator of the GDF15-GFRAL aversive response by mediating cleavage and inactivation of GFRAL (By similarity).</text>
</comment>
<comment type="catalytic activity">
    <reaction evidence="3">
        <text>Endopeptidase activity. Activates progelatinase A by cleavage of the propeptide at 37-Asn-|-Leu-38. Other bonds hydrolyzed include 35-Gly-|-Ile-36 in the propeptide of collagenase 3, and 341-Asn-|-Phe-342, 441-Asp-|-Leu-442 and 354-Gln-|-Thr-355 in the aggrecan interglobular domain.</text>
        <dbReference type="EC" id="3.4.24.80"/>
    </reaction>
</comment>
<comment type="cofactor">
    <cofactor evidence="3">
        <name>Zn(2+)</name>
        <dbReference type="ChEBI" id="CHEBI:29105"/>
    </cofactor>
    <text evidence="3">Binds 1 zinc ion per subunit.</text>
</comment>
<comment type="cofactor">
    <cofactor evidence="3">
        <name>Ca(2+)</name>
        <dbReference type="ChEBI" id="CHEBI:29108"/>
    </cofactor>
</comment>
<comment type="subunit">
    <text evidence="3">Interacts (via C-terminal cytoplasmic tail) with BST2.</text>
</comment>
<comment type="subcellular location">
    <subcellularLocation>
        <location evidence="3">Cell membrane</location>
        <topology evidence="3">Single-pass type I membrane protein</topology>
    </subcellularLocation>
    <subcellularLocation>
        <location evidence="3">Melanosome</location>
    </subcellularLocation>
    <subcellularLocation>
        <location evidence="3">Cytoplasm</location>
    </subcellularLocation>
    <text evidence="3">Identified by mass spectrometry in melanosome fractions from stage I to stage IV. Forms a complex with BST2 and localizes to the cytoplasm.</text>
</comment>
<comment type="domain">
    <text evidence="1">The conserved cysteine present in the cysteine-switch motif binds the catalytic zinc ion, thus inhibiting the enzyme. The dissociation of the cysteine from the zinc ion upon the activation-peptide release activates the enzyme.</text>
</comment>
<comment type="PTM">
    <text evidence="3">The precursor is cleaved by a furin endopeptidase.</text>
</comment>
<comment type="PTM">
    <text evidence="3">Tyrosine phosphorylated by PKDCC/VLK.</text>
</comment>
<comment type="similarity">
    <text evidence="8">Belongs to the peptidase M10A family.</text>
</comment>
<accession>Q5RES1</accession>
<reference key="1">
    <citation type="submission" date="2004-11" db="EMBL/GenBank/DDBJ databases">
        <authorList>
            <consortium name="The German cDNA consortium"/>
        </authorList>
    </citation>
    <scope>NUCLEOTIDE SEQUENCE [LARGE SCALE MRNA]</scope>
    <source>
        <tissue>Kidney</tissue>
    </source>
</reference>